<sequence>MSSVLKAYERFTLTQELQDQSEEGTIPPTTLKPVIRVFILTSNNPELRSRLLLFCLRIVLSNGARDSHRFGALLTMFSLPSATMLNHVKLADQSPEADIERVEIDGFEEGSFRLIPNARSGMSRGEINAYAALAEDLPDTLNHATPFVDSEVEGTAWDEIETFLDMCYSVLMQAWIVTCKCMTAPDQPAASIEKRLQKYRQQGRINPRYLLQPEARRIIQNVIRKGMVVRHFLTFELQLARAQSLVSNRYYAMVGDVGKYIENCGMGGFFLTLKYALGTRWPTLALAAFSGELTKLKSLMALYQTLGEQARYLALLESPHLMDFAAANYPLLYSYAMGIGYVLDVNMRNYAFSRSYMNKTYFQLGMETARKQQGAVDMRMAEDLGLTQAERTEMANTLAKLTTANRGADTRGGVNPFSSVTGTTQVPAAATGDTLESYMAADRLRQRYADAGTHDDEMPPLEEEEEDDTSAGPRTGPTLEQVALDIQNAAVGAPIHTDDLNAALGDLDI</sequence>
<keyword id="KW-0002">3D-structure</keyword>
<keyword id="KW-0167">Capsid protein</keyword>
<keyword id="KW-1139">Helical capsid protein</keyword>
<keyword id="KW-1035">Host cytoplasm</keyword>
<keyword id="KW-1185">Reference proteome</keyword>
<keyword id="KW-0687">Ribonucleoprotein</keyword>
<keyword id="KW-0694">RNA-binding</keyword>
<keyword id="KW-0543">Viral nucleoprotein</keyword>
<keyword id="KW-0946">Virion</keyword>
<evidence type="ECO:0000250" key="1"/>
<evidence type="ECO:0000250" key="2">
    <source>
        <dbReference type="UniProtKB" id="O57286"/>
    </source>
</evidence>
<evidence type="ECO:0000250" key="3">
    <source>
        <dbReference type="UniProtKB" id="O89339"/>
    </source>
</evidence>
<evidence type="ECO:0000250" key="4">
    <source>
        <dbReference type="UniProtKB" id="P06159"/>
    </source>
</evidence>
<evidence type="ECO:0000250" key="5">
    <source>
        <dbReference type="UniProtKB" id="Q07097"/>
    </source>
</evidence>
<evidence type="ECO:0000256" key="6">
    <source>
        <dbReference type="SAM" id="MobiDB-lite"/>
    </source>
</evidence>
<evidence type="ECO:0000305" key="7"/>
<evidence type="ECO:0007829" key="8">
    <source>
        <dbReference type="PDB" id="4XJN"/>
    </source>
</evidence>
<evidence type="ECO:0007829" key="9">
    <source>
        <dbReference type="PDB" id="5WKN"/>
    </source>
</evidence>
<gene>
    <name type="primary">NP</name>
    <name type="synonym">N</name>
</gene>
<organismHost>
    <name type="scientific">Canis lupus familiaris</name>
    <name type="common">Dog</name>
    <name type="synonym">Canis familiaris</name>
    <dbReference type="NCBI Taxonomy" id="9615"/>
</organismHost>
<organismHost>
    <name type="scientific">Homo sapiens</name>
    <name type="common">Human</name>
    <dbReference type="NCBI Taxonomy" id="9606"/>
</organismHost>
<protein>
    <recommendedName>
        <fullName>Nucleoprotein</fullName>
    </recommendedName>
    <alternativeName>
        <fullName>Nucleocapsid protein</fullName>
        <shortName>NP</shortName>
        <shortName>Protein N</shortName>
    </alternativeName>
</protein>
<organism>
    <name type="scientific">Parainfluenza virus 5 (strain W3)</name>
    <name type="common">PIV5</name>
    <name type="synonym">Simian virus 5</name>
    <dbReference type="NCBI Taxonomy" id="11208"/>
    <lineage>
        <taxon>Viruses</taxon>
        <taxon>Riboviria</taxon>
        <taxon>Orthornavirae</taxon>
        <taxon>Negarnaviricota</taxon>
        <taxon>Haploviricotina</taxon>
        <taxon>Monjiviricetes</taxon>
        <taxon>Mononegavirales</taxon>
        <taxon>Paramyxoviridae</taxon>
        <taxon>Rubulavirinae</taxon>
        <taxon>Orthorubulavirus</taxon>
        <taxon>Orthorubulavirus mammalis</taxon>
        <taxon>Mammalian orthorubulavirus 5</taxon>
    </lineage>
</organism>
<feature type="chain" id="PRO_0000142686" description="Nucleoprotein">
    <location>
        <begin position="1"/>
        <end position="509"/>
    </location>
</feature>
<feature type="region of interest" description="Ncore" evidence="4">
    <location>
        <begin position="1"/>
        <end position="404"/>
    </location>
</feature>
<feature type="region of interest" description="Ntail" evidence="4">
    <location>
        <begin position="405"/>
        <end position="509"/>
    </location>
</feature>
<feature type="region of interest" description="Disordered" evidence="6">
    <location>
        <begin position="452"/>
        <end position="477"/>
    </location>
</feature>
<feature type="compositionally biased region" description="Acidic residues" evidence="6">
    <location>
        <begin position="458"/>
        <end position="469"/>
    </location>
</feature>
<feature type="binding site" evidence="2">
    <location>
        <position position="180"/>
    </location>
    <ligand>
        <name>RNA</name>
        <dbReference type="ChEBI" id="CHEBI:33697"/>
    </ligand>
</feature>
<feature type="binding site" evidence="2">
    <location>
        <position position="195"/>
    </location>
    <ligand>
        <name>RNA</name>
        <dbReference type="ChEBI" id="CHEBI:33697"/>
    </ligand>
</feature>
<feature type="binding site" evidence="2">
    <location>
        <position position="260"/>
    </location>
    <ligand>
        <name>RNA</name>
        <dbReference type="ChEBI" id="CHEBI:33697"/>
    </ligand>
</feature>
<feature type="binding site" evidence="2">
    <location>
        <position position="350"/>
    </location>
    <ligand>
        <name>RNA</name>
        <dbReference type="ChEBI" id="CHEBI:33697"/>
    </ligand>
</feature>
<feature type="binding site" evidence="2">
    <location>
        <position position="354"/>
    </location>
    <ligand>
        <name>RNA</name>
        <dbReference type="ChEBI" id="CHEBI:33697"/>
    </ligand>
</feature>
<feature type="helix" evidence="8">
    <location>
        <begin position="4"/>
        <end position="17"/>
    </location>
</feature>
<feature type="strand" evidence="8">
    <location>
        <begin position="18"/>
        <end position="22"/>
    </location>
</feature>
<feature type="helix" evidence="9">
    <location>
        <begin position="45"/>
        <end position="60"/>
    </location>
</feature>
<feature type="helix" evidence="9">
    <location>
        <begin position="66"/>
        <end position="78"/>
    </location>
</feature>
<feature type="helix" evidence="9">
    <location>
        <begin position="82"/>
        <end position="88"/>
    </location>
</feature>
<feature type="strand" evidence="9">
    <location>
        <begin position="95"/>
        <end position="97"/>
    </location>
</feature>
<feature type="strand" evidence="9">
    <location>
        <begin position="113"/>
        <end position="116"/>
    </location>
</feature>
<feature type="strand" evidence="9">
    <location>
        <begin position="119"/>
        <end position="121"/>
    </location>
</feature>
<feature type="helix" evidence="9">
    <location>
        <begin position="124"/>
        <end position="134"/>
    </location>
</feature>
<feature type="strand" evidence="8">
    <location>
        <begin position="139"/>
        <end position="141"/>
    </location>
</feature>
<feature type="helix" evidence="9">
    <location>
        <begin position="142"/>
        <end position="144"/>
    </location>
</feature>
<feature type="strand" evidence="9">
    <location>
        <begin position="145"/>
        <end position="149"/>
    </location>
</feature>
<feature type="helix" evidence="9">
    <location>
        <begin position="160"/>
        <end position="176"/>
    </location>
</feature>
<feature type="turn" evidence="8">
    <location>
        <begin position="177"/>
        <end position="179"/>
    </location>
</feature>
<feature type="helix" evidence="9">
    <location>
        <begin position="195"/>
        <end position="201"/>
    </location>
</feature>
<feature type="helix" evidence="9">
    <location>
        <begin position="207"/>
        <end position="209"/>
    </location>
</feature>
<feature type="helix" evidence="9">
    <location>
        <begin position="213"/>
        <end position="225"/>
    </location>
</feature>
<feature type="helix" evidence="9">
    <location>
        <begin position="227"/>
        <end position="240"/>
    </location>
</feature>
<feature type="turn" evidence="9">
    <location>
        <begin position="245"/>
        <end position="247"/>
    </location>
</feature>
<feature type="helix" evidence="9">
    <location>
        <begin position="249"/>
        <end position="261"/>
    </location>
</feature>
<feature type="turn" evidence="9">
    <location>
        <begin position="262"/>
        <end position="265"/>
    </location>
</feature>
<feature type="helix" evidence="9">
    <location>
        <begin position="267"/>
        <end position="275"/>
    </location>
</feature>
<feature type="strand" evidence="9">
    <location>
        <begin position="277"/>
        <end position="279"/>
    </location>
</feature>
<feature type="helix" evidence="9">
    <location>
        <begin position="282"/>
        <end position="285"/>
    </location>
</feature>
<feature type="helix" evidence="9">
    <location>
        <begin position="287"/>
        <end position="289"/>
    </location>
</feature>
<feature type="helix" evidence="9">
    <location>
        <begin position="290"/>
        <end position="306"/>
    </location>
</feature>
<feature type="helix" evidence="9">
    <location>
        <begin position="307"/>
        <end position="312"/>
    </location>
</feature>
<feature type="turn" evidence="9">
    <location>
        <begin position="313"/>
        <end position="317"/>
    </location>
</feature>
<feature type="helix" evidence="9">
    <location>
        <begin position="321"/>
        <end position="324"/>
    </location>
</feature>
<feature type="helix" evidence="9">
    <location>
        <begin position="326"/>
        <end position="328"/>
    </location>
</feature>
<feature type="helix" evidence="9">
    <location>
        <begin position="330"/>
        <end position="343"/>
    </location>
</feature>
<feature type="helix" evidence="9">
    <location>
        <begin position="345"/>
        <end position="347"/>
    </location>
</feature>
<feature type="helix" evidence="9">
    <location>
        <begin position="359"/>
        <end position="370"/>
    </location>
</feature>
<feature type="strand" evidence="8">
    <location>
        <begin position="372"/>
        <end position="374"/>
    </location>
</feature>
<feature type="helix" evidence="8">
    <location>
        <begin position="378"/>
        <end position="383"/>
    </location>
</feature>
<feature type="helix" evidence="8">
    <location>
        <begin position="388"/>
        <end position="400"/>
    </location>
</feature>
<proteinExistence type="evidence at protein level"/>
<dbReference type="EMBL" id="M81442">
    <property type="protein sequence ID" value="AAA47880.1"/>
    <property type="molecule type" value="Genomic_RNA"/>
</dbReference>
<dbReference type="EMBL" id="AF052755">
    <property type="protein sequence ID" value="AAC95511.1"/>
    <property type="molecule type" value="Genomic_RNA"/>
</dbReference>
<dbReference type="PDB" id="4XJN">
    <property type="method" value="X-ray"/>
    <property type="resolution" value="3.11 A"/>
    <property type="chains" value="A/B/C/D/E/F/G/H/I/J/K/L/M=1-509"/>
</dbReference>
<dbReference type="PDB" id="5WKN">
    <property type="method" value="X-ray"/>
    <property type="resolution" value="2.65 A"/>
    <property type="chains" value="A/B=32-372"/>
</dbReference>
<dbReference type="PDBsum" id="4XJN"/>
<dbReference type="PDBsum" id="5WKN"/>
<dbReference type="SMR" id="Q88435"/>
<dbReference type="KEGG" id="vg:3160799"/>
<dbReference type="EvolutionaryTrace" id="Q88435"/>
<dbReference type="Proteomes" id="UP000007232">
    <property type="component" value="Segment"/>
</dbReference>
<dbReference type="GO" id="GO:0019029">
    <property type="term" value="C:helical viral capsid"/>
    <property type="evidence" value="ECO:0007669"/>
    <property type="project" value="UniProtKB-KW"/>
</dbReference>
<dbReference type="GO" id="GO:0030430">
    <property type="term" value="C:host cell cytoplasm"/>
    <property type="evidence" value="ECO:0007669"/>
    <property type="project" value="UniProtKB-SubCell"/>
</dbReference>
<dbReference type="GO" id="GO:1990904">
    <property type="term" value="C:ribonucleoprotein complex"/>
    <property type="evidence" value="ECO:0007669"/>
    <property type="project" value="UniProtKB-KW"/>
</dbReference>
<dbReference type="GO" id="GO:0019013">
    <property type="term" value="C:viral nucleocapsid"/>
    <property type="evidence" value="ECO:0007669"/>
    <property type="project" value="UniProtKB-KW"/>
</dbReference>
<dbReference type="GO" id="GO:0003723">
    <property type="term" value="F:RNA binding"/>
    <property type="evidence" value="ECO:0007669"/>
    <property type="project" value="UniProtKB-KW"/>
</dbReference>
<dbReference type="GO" id="GO:0005198">
    <property type="term" value="F:structural molecule activity"/>
    <property type="evidence" value="ECO:0007669"/>
    <property type="project" value="InterPro"/>
</dbReference>
<dbReference type="InterPro" id="IPR002021">
    <property type="entry name" value="Paramyx_ncap"/>
</dbReference>
<dbReference type="Pfam" id="PF00973">
    <property type="entry name" value="Paramyxo_ncap"/>
    <property type="match status" value="1"/>
</dbReference>
<reference key="1">
    <citation type="journal article" date="1992" name="Virus Res.">
        <title>Molecular cloning of the NP and L genes of simian virus 5: identification of highly conserved domains in paramyxovirus NP and L proteins.</title>
        <authorList>
            <person name="Parks G.D."/>
            <person name="Ward C.D."/>
            <person name="Lamb R.A."/>
        </authorList>
    </citation>
    <scope>NUCLEOTIDE SEQUENCE [GENOMIC RNA]</scope>
</reference>
<reference key="2">
    <citation type="journal article" date="1996" name="Virology">
        <title>NP:P and NP:V interactions of the paramyxovirus simian virus 5 examined using a novel protein:protein capture assay.</title>
        <authorList>
            <person name="Randall R.E."/>
            <person name="Bermingham A."/>
        </authorList>
    </citation>
    <scope>INTERACTION WITH PROTEIN P AND PROTEIN V</scope>
</reference>
<name>NCAP_PIV5</name>
<accession>Q88435</accession>
<comment type="function">
    <text evidence="3 4">Forms the helical nucleocapsid (NC), protecting the genome from nucleases (By similarity). The encapsidated genomic RNA serves as template for transcription and replication; encapsidation by N is coupled to RNA synthesis. Forms the encapsidation complex with the phosphoprotein protein P. Before encapsidation, the newly synthesized free N protein, so-called N0, is chaperoned by P (By similarity).</text>
</comment>
<comment type="subunit">
    <text evidence="2 4 5">Homomultimer; forms the nucleocapsid (By similarity). Binds to the viral genomic RNA (By similarity). N0 interacts with the phosphoprotein (via N-terminus); this interaction allows P to chaperon N0 to avoid N polymerization before encapsidation. Interacts as N-RNA template with the phosphoprotein (via C-terminus); this interaction positions the polymerase on the template (By similarity).</text>
</comment>
<comment type="subcellular location">
    <subcellularLocation>
        <location evidence="7">Virion</location>
    </subcellularLocation>
    <subcellularLocation>
        <location evidence="1">Host cytoplasm</location>
    </subcellularLocation>
</comment>
<comment type="domain">
    <text evidence="4">Ncore is globular and carries the regions required for self-assembly and RNA-binding. Ntail is an intrinsically disordered monomeric domain in the C-terminus.</text>
</comment>
<comment type="similarity">
    <text evidence="7">Belongs to the paramyxoviruses nucleocapsid family.</text>
</comment>